<comment type="function">
    <text evidence="1">Receptor tyrosine kinase that transduces signals from the extracellular matrix into the cytoplasm by binding to MST1 ligand. Regulates many physiological processes including cell survival, migration and differentiation. Ligand binding at the cell surface induces autophosphorylation of RON on its intracellular domain that provides docking sites for downstream signaling molecules. Following activation by ligand, interacts with the PI3-kinase subunit PIK3R1, PLCG1 or the adapter GAB1. Recruitment of these downstream effectors by RON leads to the activation of several signaling cascades including the RAS-ERK, PI3 kinase-AKT, or PLCgamma-PKC. RON signaling activates the wound healing response by promoting epithelial cell migration, proliferation as well as survival at the wound site. Also plays a role in the innate immune response by regulating the migration and phagocytic activity of macrophages. Alternatively, RON can also promote signals such as cell migration and proliferation in response to growth factors other than MST1 ligand.</text>
</comment>
<comment type="catalytic activity">
    <reaction evidence="5">
        <text>L-tyrosyl-[protein] + ATP = O-phospho-L-tyrosyl-[protein] + ADP + H(+)</text>
        <dbReference type="Rhea" id="RHEA:10596"/>
        <dbReference type="Rhea" id="RHEA-COMP:10136"/>
        <dbReference type="Rhea" id="RHEA-COMP:20101"/>
        <dbReference type="ChEBI" id="CHEBI:15378"/>
        <dbReference type="ChEBI" id="CHEBI:30616"/>
        <dbReference type="ChEBI" id="CHEBI:46858"/>
        <dbReference type="ChEBI" id="CHEBI:61978"/>
        <dbReference type="ChEBI" id="CHEBI:456216"/>
        <dbReference type="EC" id="2.7.10.1"/>
    </reaction>
</comment>
<comment type="activity regulation">
    <text>In its inactive state, the C-terminal tail interacts with the catalytic domain and inhibits the kinase activity. Upon ligand binding, the C-terminal tail is displaced and becomes phosphorylated, thus increasing the kinase activity.</text>
</comment>
<comment type="subunit">
    <text evidence="7">Heterodimer of an alpha chain and a beta chain which are disulfide linked. Binds PLXNB1. Associates with and is negatively regulated by HYAL2. Interacts when phosphorylated with downstream effectors including PIK3R1, PCLG1, GRB2 and GAB1. Interacts with integrin beta1/ITGB1 in a ligand-independent fashion. Isoform sf-Stk forms covalent heterodimers with friend spleen focus-forming virus (FSFFV) gp55.</text>
</comment>
<comment type="subcellular location">
    <subcellularLocation>
        <location>Membrane</location>
        <topology>Single-pass type I membrane protein</topology>
    </subcellularLocation>
</comment>
<comment type="alternative products">
    <event type="alternative splicing"/>
    <isoform>
        <id>Q62190-1</id>
        <name>RON</name>
        <sequence type="displayed"/>
    </isoform>
    <isoform>
        <id>Q62190-2</id>
        <name>sf-Stk</name>
        <sequence type="not described"/>
    </isoform>
</comment>
<comment type="tissue specificity">
    <text evidence="8">Expressed in liver, skin, lung, brain, testis and kidney.</text>
</comment>
<comment type="PTM">
    <text evidence="1">Proteolytic processing yields the two subunits.</text>
</comment>
<comment type="PTM">
    <text evidence="1">Autophosphorylated in response to ligand binding on Tyr-1215 and Tyr-1216 in the kinase domain leading to further phosphorylation of Tyr-1330 and Tyr-1337 in the C-terminal multifunctional docking site.</text>
</comment>
<comment type="PTM">
    <text evidence="1">Ubiquitinated. Ubiquitination by CBL regulates the receptor stability and activity through proteasomal degradation (By similarity).</text>
</comment>
<comment type="PTM">
    <text evidence="1">O-mannosylation of IPT/TIG domains on Thr or Ser residues by TMEM260 is required for protein maturation. O-mannosylated residues are composed of single mannose glycans that are not elongated or modified.</text>
</comment>
<comment type="disruption phenotype">
    <text evidence="9">Mice show increased inflammation in an IFN-gamma-mediated delayed-type hypersensitivity reaction and increased susceptibility to lipopolysaccharide-induced endotoxic shock.</text>
</comment>
<comment type="miscellaneous">
    <text>Interaction with FSFFV envelope-like membrane glycoprotein gp55 results in constitutive tyrosine phosphorylation and activation of isoform sf-Stk.</text>
</comment>
<comment type="miscellaneous">
    <molecule>Isoform sf-Stk</molecule>
    <text evidence="10">Lacks part of the extracellular domain, oligomerizes and is constitutively activated. This isoform confers host susceptibility to Friend disease.</text>
</comment>
<comment type="similarity">
    <text evidence="3">Belongs to the protein kinase superfamily. Tyr protein kinase family.</text>
</comment>
<accession>Q62190</accession>
<accession>E9QMZ4</accession>
<accession>Q62555</accession>
<dbReference type="EC" id="2.7.10.1"/>
<dbReference type="EMBL" id="X74736">
    <property type="protein sequence ID" value="CAA52754.1"/>
    <property type="molecule type" value="mRNA"/>
</dbReference>
<dbReference type="EMBL" id="U65949">
    <property type="protein sequence ID" value="AAC39953.1"/>
    <property type="molecule type" value="Genomic_DNA"/>
</dbReference>
<dbReference type="EMBL" id="AL731808">
    <property type="status" value="NOT_ANNOTATED_CDS"/>
    <property type="molecule type" value="Genomic_DNA"/>
</dbReference>
<dbReference type="CCDS" id="CCDS23509.1">
    <molecule id="Q62190-1"/>
</dbReference>
<dbReference type="PIR" id="I48751">
    <property type="entry name" value="I48751"/>
</dbReference>
<dbReference type="RefSeq" id="NP_033100.2">
    <molecule id="Q62190-1"/>
    <property type="nucleotide sequence ID" value="NM_009074.3"/>
</dbReference>
<dbReference type="SMR" id="Q62190"/>
<dbReference type="BioGRID" id="202955">
    <property type="interactions" value="11"/>
</dbReference>
<dbReference type="FunCoup" id="Q62190">
    <property type="interactions" value="261"/>
</dbReference>
<dbReference type="IntAct" id="Q62190">
    <property type="interactions" value="2"/>
</dbReference>
<dbReference type="MINT" id="Q62190"/>
<dbReference type="STRING" id="10090.ENSMUSP00000035203"/>
<dbReference type="BindingDB" id="Q62190"/>
<dbReference type="ChEMBL" id="CHEMBL1795170"/>
<dbReference type="DrugCentral" id="Q62190"/>
<dbReference type="GlyCosmos" id="Q62190">
    <property type="glycosylation" value="8 sites, No reported glycans"/>
</dbReference>
<dbReference type="GlyGen" id="Q62190">
    <property type="glycosylation" value="8 sites, 2 N-linked glycans (3 sites)"/>
</dbReference>
<dbReference type="iPTMnet" id="Q62190"/>
<dbReference type="PhosphoSitePlus" id="Q62190"/>
<dbReference type="jPOST" id="Q62190"/>
<dbReference type="PaxDb" id="10090-ENSMUSP00000035203"/>
<dbReference type="ProteomicsDB" id="260829">
    <molecule id="Q62190-1"/>
</dbReference>
<dbReference type="Antibodypedia" id="2092">
    <property type="antibodies" value="972 antibodies from 40 providers"/>
</dbReference>
<dbReference type="DNASU" id="19882"/>
<dbReference type="Ensembl" id="ENSMUST00000035203.9">
    <molecule id="Q62190-1"/>
    <property type="protein sequence ID" value="ENSMUSP00000035203.8"/>
    <property type="gene ID" value="ENSMUSG00000032584.13"/>
</dbReference>
<dbReference type="GeneID" id="19882"/>
<dbReference type="KEGG" id="mmu:19882"/>
<dbReference type="UCSC" id="uc009rni.1">
    <molecule id="Q62190-1"/>
    <property type="organism name" value="mouse"/>
</dbReference>
<dbReference type="AGR" id="MGI:99614"/>
<dbReference type="CTD" id="4486"/>
<dbReference type="MGI" id="MGI:99614">
    <property type="gene designation" value="Mst1r"/>
</dbReference>
<dbReference type="VEuPathDB" id="HostDB:ENSMUSG00000032584"/>
<dbReference type="eggNOG" id="KOG1095">
    <property type="taxonomic scope" value="Eukaryota"/>
</dbReference>
<dbReference type="eggNOG" id="KOG3610">
    <property type="taxonomic scope" value="Eukaryota"/>
</dbReference>
<dbReference type="GeneTree" id="ENSGT00940000157842"/>
<dbReference type="HOGENOM" id="CLU_005158_0_0_1"/>
<dbReference type="InParanoid" id="Q62190"/>
<dbReference type="OMA" id="NISCRHF"/>
<dbReference type="OrthoDB" id="9985181at2759"/>
<dbReference type="PhylomeDB" id="Q62190"/>
<dbReference type="TreeFam" id="TF317402"/>
<dbReference type="BRENDA" id="2.7.10.1">
    <property type="organism ID" value="3474"/>
</dbReference>
<dbReference type="Reactome" id="R-MMU-8852405">
    <property type="pathway name" value="Signaling by MST1"/>
</dbReference>
<dbReference type="BioGRID-ORCS" id="19882">
    <property type="hits" value="3 hits in 80 CRISPR screens"/>
</dbReference>
<dbReference type="PRO" id="PR:Q62190"/>
<dbReference type="Proteomes" id="UP000000589">
    <property type="component" value="Chromosome 9"/>
</dbReference>
<dbReference type="RNAct" id="Q62190">
    <property type="molecule type" value="protein"/>
</dbReference>
<dbReference type="Bgee" id="ENSMUSG00000032584">
    <property type="expression patterns" value="Expressed in lip and 123 other cell types or tissues"/>
</dbReference>
<dbReference type="ExpressionAtlas" id="Q62190">
    <property type="expression patterns" value="baseline and differential"/>
</dbReference>
<dbReference type="GO" id="GO:0005886">
    <property type="term" value="C:plasma membrane"/>
    <property type="evidence" value="ECO:0000314"/>
    <property type="project" value="MGI"/>
</dbReference>
<dbReference type="GO" id="GO:0001725">
    <property type="term" value="C:stress fiber"/>
    <property type="evidence" value="ECO:0000314"/>
    <property type="project" value="MGI"/>
</dbReference>
<dbReference type="GO" id="GO:0005773">
    <property type="term" value="C:vacuole"/>
    <property type="evidence" value="ECO:0000314"/>
    <property type="project" value="MGI"/>
</dbReference>
<dbReference type="GO" id="GO:0005524">
    <property type="term" value="F:ATP binding"/>
    <property type="evidence" value="ECO:0007669"/>
    <property type="project" value="UniProtKB-KW"/>
</dbReference>
<dbReference type="GO" id="GO:0019899">
    <property type="term" value="F:enzyme binding"/>
    <property type="evidence" value="ECO:0007669"/>
    <property type="project" value="Ensembl"/>
</dbReference>
<dbReference type="GO" id="GO:0004714">
    <property type="term" value="F:transmembrane receptor protein tyrosine kinase activity"/>
    <property type="evidence" value="ECO:0007669"/>
    <property type="project" value="UniProtKB-EC"/>
</dbReference>
<dbReference type="GO" id="GO:0007169">
    <property type="term" value="P:cell surface receptor protein tyrosine kinase signaling pathway"/>
    <property type="evidence" value="ECO:0007669"/>
    <property type="project" value="InterPro"/>
</dbReference>
<dbReference type="GO" id="GO:0045087">
    <property type="term" value="P:innate immune response"/>
    <property type="evidence" value="ECO:0007669"/>
    <property type="project" value="UniProtKB-KW"/>
</dbReference>
<dbReference type="GO" id="GO:0051897">
    <property type="term" value="P:positive regulation of phosphatidylinositol 3-kinase/protein kinase B signal transduction"/>
    <property type="evidence" value="ECO:0007669"/>
    <property type="project" value="Ensembl"/>
</dbReference>
<dbReference type="GO" id="GO:0009615">
    <property type="term" value="P:response to virus"/>
    <property type="evidence" value="ECO:0000315"/>
    <property type="project" value="MGI"/>
</dbReference>
<dbReference type="CDD" id="cd01179">
    <property type="entry name" value="IPT_plexin_repeat2"/>
    <property type="match status" value="1"/>
</dbReference>
<dbReference type="CDD" id="cd05058">
    <property type="entry name" value="PTKc_Met_Ron"/>
    <property type="match status" value="1"/>
</dbReference>
<dbReference type="CDD" id="cd11279">
    <property type="entry name" value="Sema_RON"/>
    <property type="match status" value="1"/>
</dbReference>
<dbReference type="FunFam" id="1.10.510.10:FF:000093">
    <property type="entry name" value="Hepatocyte growth factor receptor"/>
    <property type="match status" value="1"/>
</dbReference>
<dbReference type="FunFam" id="2.60.40.10:FF:000213">
    <property type="entry name" value="Hepatocyte growth factor receptor"/>
    <property type="match status" value="1"/>
</dbReference>
<dbReference type="FunFam" id="2.60.40.10:FF:000679">
    <property type="entry name" value="Macrophage stimulating 1 receptor"/>
    <property type="match status" value="1"/>
</dbReference>
<dbReference type="FunFam" id="3.30.200.20:FF:000251">
    <property type="entry name" value="Macrophage stimulating 1 receptor"/>
    <property type="match status" value="1"/>
</dbReference>
<dbReference type="FunFam" id="2.130.10.10:FF:000194">
    <property type="entry name" value="Macrophage-stimulating 1 receptor a"/>
    <property type="match status" value="1"/>
</dbReference>
<dbReference type="FunFam" id="3.30.1680.10:FF:000006">
    <property type="entry name" value="Macrophage-stimulating 1 receptor b"/>
    <property type="match status" value="1"/>
</dbReference>
<dbReference type="Gene3D" id="2.60.40.10">
    <property type="entry name" value="Immunoglobulins"/>
    <property type="match status" value="2"/>
</dbReference>
<dbReference type="Gene3D" id="3.30.1680.10">
    <property type="entry name" value="ligand-binding face of the semaphorins, domain 2"/>
    <property type="match status" value="1"/>
</dbReference>
<dbReference type="Gene3D" id="3.30.200.20">
    <property type="entry name" value="Phosphorylase Kinase, domain 1"/>
    <property type="match status" value="1"/>
</dbReference>
<dbReference type="Gene3D" id="1.10.510.10">
    <property type="entry name" value="Transferase(Phosphotransferase) domain 1"/>
    <property type="match status" value="1"/>
</dbReference>
<dbReference type="Gene3D" id="2.130.10.10">
    <property type="entry name" value="YVTN repeat-like/Quinoprotein amine dehydrogenase"/>
    <property type="match status" value="1"/>
</dbReference>
<dbReference type="InterPro" id="IPR013783">
    <property type="entry name" value="Ig-like_fold"/>
</dbReference>
<dbReference type="InterPro" id="IPR014756">
    <property type="entry name" value="Ig_E-set"/>
</dbReference>
<dbReference type="InterPro" id="IPR002909">
    <property type="entry name" value="IPT_dom"/>
</dbReference>
<dbReference type="InterPro" id="IPR011009">
    <property type="entry name" value="Kinase-like_dom_sf"/>
</dbReference>
<dbReference type="InterPro" id="IPR000719">
    <property type="entry name" value="Prot_kinase_dom"/>
</dbReference>
<dbReference type="InterPro" id="IPR017441">
    <property type="entry name" value="Protein_kinase_ATP_BS"/>
</dbReference>
<dbReference type="InterPro" id="IPR016201">
    <property type="entry name" value="PSI"/>
</dbReference>
<dbReference type="InterPro" id="IPR039413">
    <property type="entry name" value="RON_Sema"/>
</dbReference>
<dbReference type="InterPro" id="IPR050122">
    <property type="entry name" value="RTK"/>
</dbReference>
<dbReference type="InterPro" id="IPR001627">
    <property type="entry name" value="Semap_dom"/>
</dbReference>
<dbReference type="InterPro" id="IPR036352">
    <property type="entry name" value="Semap_dom_sf"/>
</dbReference>
<dbReference type="InterPro" id="IPR001245">
    <property type="entry name" value="Ser-Thr/Tyr_kinase_cat_dom"/>
</dbReference>
<dbReference type="InterPro" id="IPR008266">
    <property type="entry name" value="Tyr_kinase_AS"/>
</dbReference>
<dbReference type="InterPro" id="IPR020635">
    <property type="entry name" value="Tyr_kinase_cat_dom"/>
</dbReference>
<dbReference type="InterPro" id="IPR016244">
    <property type="entry name" value="Tyr_kinase_HGF/MSP_rcpt"/>
</dbReference>
<dbReference type="InterPro" id="IPR015943">
    <property type="entry name" value="WD40/YVTN_repeat-like_dom_sf"/>
</dbReference>
<dbReference type="PANTHER" id="PTHR24416:SF564">
    <property type="entry name" value="MACROPHAGE-STIMULATING PROTEIN RECEPTOR"/>
    <property type="match status" value="1"/>
</dbReference>
<dbReference type="PANTHER" id="PTHR24416">
    <property type="entry name" value="TYROSINE-PROTEIN KINASE RECEPTOR"/>
    <property type="match status" value="1"/>
</dbReference>
<dbReference type="Pfam" id="PF07714">
    <property type="entry name" value="PK_Tyr_Ser-Thr"/>
    <property type="match status" value="1"/>
</dbReference>
<dbReference type="Pfam" id="PF01403">
    <property type="entry name" value="Sema"/>
    <property type="match status" value="1"/>
</dbReference>
<dbReference type="Pfam" id="PF01833">
    <property type="entry name" value="TIG"/>
    <property type="match status" value="2"/>
</dbReference>
<dbReference type="PIRSF" id="PIRSF000617">
    <property type="entry name" value="TyrPK_HGF-R"/>
    <property type="match status" value="1"/>
</dbReference>
<dbReference type="PRINTS" id="PR00109">
    <property type="entry name" value="TYRKINASE"/>
</dbReference>
<dbReference type="SMART" id="SM00429">
    <property type="entry name" value="IPT"/>
    <property type="match status" value="4"/>
</dbReference>
<dbReference type="SMART" id="SM00423">
    <property type="entry name" value="PSI"/>
    <property type="match status" value="1"/>
</dbReference>
<dbReference type="SMART" id="SM00630">
    <property type="entry name" value="Sema"/>
    <property type="match status" value="1"/>
</dbReference>
<dbReference type="SMART" id="SM00219">
    <property type="entry name" value="TyrKc"/>
    <property type="match status" value="1"/>
</dbReference>
<dbReference type="SUPFAM" id="SSF81296">
    <property type="entry name" value="E set domains"/>
    <property type="match status" value="3"/>
</dbReference>
<dbReference type="SUPFAM" id="SSF103575">
    <property type="entry name" value="Plexin repeat"/>
    <property type="match status" value="1"/>
</dbReference>
<dbReference type="SUPFAM" id="SSF56112">
    <property type="entry name" value="Protein kinase-like (PK-like)"/>
    <property type="match status" value="1"/>
</dbReference>
<dbReference type="SUPFAM" id="SSF101912">
    <property type="entry name" value="Sema domain"/>
    <property type="match status" value="1"/>
</dbReference>
<dbReference type="PROSITE" id="PS00107">
    <property type="entry name" value="PROTEIN_KINASE_ATP"/>
    <property type="match status" value="1"/>
</dbReference>
<dbReference type="PROSITE" id="PS50011">
    <property type="entry name" value="PROTEIN_KINASE_DOM"/>
    <property type="match status" value="1"/>
</dbReference>
<dbReference type="PROSITE" id="PS00109">
    <property type="entry name" value="PROTEIN_KINASE_TYR"/>
    <property type="match status" value="1"/>
</dbReference>
<dbReference type="PROSITE" id="PS51004">
    <property type="entry name" value="SEMA"/>
    <property type="match status" value="1"/>
</dbReference>
<organism>
    <name type="scientific">Mus musculus</name>
    <name type="common">Mouse</name>
    <dbReference type="NCBI Taxonomy" id="10090"/>
    <lineage>
        <taxon>Eukaryota</taxon>
        <taxon>Metazoa</taxon>
        <taxon>Chordata</taxon>
        <taxon>Craniata</taxon>
        <taxon>Vertebrata</taxon>
        <taxon>Euteleostomi</taxon>
        <taxon>Mammalia</taxon>
        <taxon>Eutheria</taxon>
        <taxon>Euarchontoglires</taxon>
        <taxon>Glires</taxon>
        <taxon>Rodentia</taxon>
        <taxon>Myomorpha</taxon>
        <taxon>Muroidea</taxon>
        <taxon>Muridae</taxon>
        <taxon>Murinae</taxon>
        <taxon>Mus</taxon>
        <taxon>Mus</taxon>
    </lineage>
</organism>
<proteinExistence type="evidence at protein level"/>
<evidence type="ECO:0000250" key="1">
    <source>
        <dbReference type="UniProtKB" id="Q04912"/>
    </source>
</evidence>
<evidence type="ECO:0000255" key="2"/>
<evidence type="ECO:0000255" key="3">
    <source>
        <dbReference type="PROSITE-ProRule" id="PRU00159"/>
    </source>
</evidence>
<evidence type="ECO:0000255" key="4">
    <source>
        <dbReference type="PROSITE-ProRule" id="PRU00352"/>
    </source>
</evidence>
<evidence type="ECO:0000255" key="5">
    <source>
        <dbReference type="PROSITE-ProRule" id="PRU10028"/>
    </source>
</evidence>
<evidence type="ECO:0000256" key="6">
    <source>
        <dbReference type="SAM" id="MobiDB-lite"/>
    </source>
</evidence>
<evidence type="ECO:0000269" key="7">
    <source>
    </source>
</evidence>
<evidence type="ECO:0000269" key="8">
    <source>
    </source>
</evidence>
<evidence type="ECO:0000269" key="9">
    <source>
    </source>
</evidence>
<evidence type="ECO:0000305" key="10"/>
<name>RON_MOUSE</name>
<sequence>MGLPLPLLQSSLLLMLLLRLSAASTNLNWQCPRIPYAASRDFSVKYVVPSFSAGGRVQATAAYEDSTNSAVFVATRNHLHVLGPDLQFIENLTTGPIGNPGCQTCASCGPGPHGPPKDTDTLVLVMEPGLPALVSCGSTLQGRCFLHELEPRGKALHLAAPACLFSANNNKPEACTDCVASPLGTRVTVVEQGHASYFYVASSLDPELAASFSPRSVSIRRLKSDTSGFQPGFPSLSVLPKYLASYLIKYVYSFHSGDFVYFLTVQPISVTSPPSALHTRLVRLNAVEPEIGDYRELVLDCHFAPKRRRRGAPEGTQPYPVLQAAHSAPVDAKLAVELSISEGQEVLFGVFVTVKDGGSGMGPNSVVCAFPIYHLNILIEEGVEYCCHSSNSSSLLSRGLDFFQTPSFCPNPPGGEASGPSSRCHYFPLMVHASFTRVDLFNGLLGSVKVTALHVTRLGNVTVAHMGTVDGRVLQVEIARSLNYLLYVSNFSLGSSGQPVHRDVSRLGNDLLFASGDQVFKVPIQGPGCRHFLTCWRCLRAQRFMGCGWCGDRCDRQKECPGSWQQDHCPPEISEFYPHSGPLRGTTRLTLCGSNFYLRPDDVVPEGTHQITVGQSPCRLLPKDSSSPRPGSLKEFIQELECELEPLVTQAVGTTNISLVITNMPAGKHFRVEGISVQEGFSFVEPVLTSIKPDFGPRAGGTYLTLEGQSLSVGTSRAVLVNGTQCRLEQVNEEQILCVTPPGAGTARVPLHLQIGGAEVPGSWTFHYKEDPIVLDISPKCGYSGSHIMIHGQHLTSAWHFTLSFHDGQSTVESRCAGQFVEQQQRRCRLPEYVVRNPQGWATGNLSVWGDGAAGFTLPGFRFLPPPSPLRAGLVELKPEEHSVKVEYVGLGAVADCVTVNMTVGGEVCQHELRGDVVICPLPPSLQLGKDGVPLQVCVDGGCHILSQVVRSSPGRASQRILLIALLVLILLVAVLAVALIFNSRRRKKQLGAHSLSPTTLSDINDTASGAPNHEESSESRDGTSVPLLRTESIRLQDLDRMLLAEVKDVLIPHEQVVIHTDQVIGKGHFGVVYHGEYTDGAQNQTHCAIKSLSRITEVQEVEAFLREGLLMRGLHHPNILALIGIMLPPEGLPRVLLPYMRHGDLLHFIRSPQRNPTVKDLVSFGLQVACGMEYLAEQKFVHRDLAARNCMLDESFTVKVADFGLARGVLDKEYYSVRQHRHARLPVKWMALESLQTYRFTTKSDVWSFGVLLWELLTRGAPPYPHIDPFDLSHFLAQGRRLPQPEYCPDSLYHVMLRCWEADPAARPTFRALVLEVKQVVASLLGDHYVQLTAAYVNVGPRAVDDGSVPPEQVQPSPQHCRSTSKPRPLSEPPLPT</sequence>
<gene>
    <name type="primary">Mst1r</name>
    <name type="synonym">Ron</name>
    <name type="synonym">Stk</name>
</gene>
<reference key="1">
    <citation type="journal article" date="1994" name="Blood">
        <title>Molecular cloning of a novel receptor tyrosine kinase gene, STK, derived from enriched hematopoietic stem cells.</title>
        <authorList>
            <person name="Iwama A."/>
            <person name="Okano A."/>
            <person name="Sudo T."/>
            <person name="Matsuda Y."/>
            <person name="Suda T."/>
        </authorList>
    </citation>
    <scope>NUCLEOTIDE SEQUENCE [MRNA]</scope>
</reference>
<reference key="2">
    <citation type="journal article" date="1998" name="Oncogene">
        <title>Characterization of the mouse Ron/Stk receptor tyrosine kinase gene.</title>
        <authorList>
            <person name="Waltz S.E."/>
            <person name="Toms C.L.V."/>
            <person name="McDowell S.A."/>
            <person name="Clay L.A."/>
            <person name="Muraoka R.S."/>
            <person name="Air E.L."/>
            <person name="Sun W.Y."/>
            <person name="Thomas M.B."/>
            <person name="Degen S.J.F."/>
        </authorList>
    </citation>
    <scope>NUCLEOTIDE SEQUENCE [GENOMIC DNA]</scope>
    <source>
        <strain>129/SvJ</strain>
    </source>
</reference>
<reference key="3">
    <citation type="journal article" date="2009" name="PLoS Biol.">
        <title>Lineage-specific biology revealed by a finished genome assembly of the mouse.</title>
        <authorList>
            <person name="Church D.M."/>
            <person name="Goodstadt L."/>
            <person name="Hillier L.W."/>
            <person name="Zody M.C."/>
            <person name="Goldstein S."/>
            <person name="She X."/>
            <person name="Bult C.J."/>
            <person name="Agarwala R."/>
            <person name="Cherry J.L."/>
            <person name="DiCuccio M."/>
            <person name="Hlavina W."/>
            <person name="Kapustin Y."/>
            <person name="Meric P."/>
            <person name="Maglott D."/>
            <person name="Birtle Z."/>
            <person name="Marques A.C."/>
            <person name="Graves T."/>
            <person name="Zhou S."/>
            <person name="Teague B."/>
            <person name="Potamousis K."/>
            <person name="Churas C."/>
            <person name="Place M."/>
            <person name="Herschleb J."/>
            <person name="Runnheim R."/>
            <person name="Forrest D."/>
            <person name="Amos-Landgraf J."/>
            <person name="Schwartz D.C."/>
            <person name="Cheng Z."/>
            <person name="Lindblad-Toh K."/>
            <person name="Eichler E.E."/>
            <person name="Ponting C.P."/>
        </authorList>
    </citation>
    <scope>NUCLEOTIDE SEQUENCE [LARGE SCALE GENOMIC DNA]</scope>
    <source>
        <strain>C57BL/6J</strain>
    </source>
</reference>
<reference key="4">
    <citation type="journal article" date="1995" name="Oncogene">
        <title>The proto-oncogene RON is involved in development of epithelial, bone and neuro-endocrine tissues.</title>
        <authorList>
            <person name="Gaudino G."/>
            <person name="Avantaggiato V."/>
            <person name="Follenzi A."/>
            <person name="Acampora D."/>
            <person name="Simeone A."/>
            <person name="Comoglio P.M."/>
        </authorList>
    </citation>
    <scope>TISSUE SPECIFICITY</scope>
</reference>
<reference key="5">
    <citation type="journal article" date="1997" name="Genes Funct.">
        <title>Deregulated inflammatory response in mice lacking the STK/RON receptor tyrosine kinase.</title>
        <authorList>
            <person name="Correll P.H."/>
            <person name="Iwama A."/>
            <person name="Tondat S."/>
            <person name="Mayrhofer G."/>
            <person name="Suda T."/>
            <person name="Bernstein A."/>
        </authorList>
    </citation>
    <scope>DISRUPTION PHENOTYPE</scope>
</reference>
<reference key="6">
    <citation type="journal article" date="1999" name="Nat. Genet.">
        <title>Fv2 encodes a truncated form of the Stk receptor tyrosine kinase.</title>
        <authorList>
            <person name="Persons D.A."/>
            <person name="Paulson R.F."/>
            <person name="Loyd M.R."/>
            <person name="Herley M.T."/>
            <person name="Bodner S.M."/>
            <person name="Bernstein A."/>
            <person name="Correll P.H."/>
            <person name="Ney P.A."/>
        </authorList>
    </citation>
    <scope>ALTERNATIVE SPLICING</scope>
</reference>
<reference key="7">
    <citation type="journal article" date="2001" name="J. Virol.">
        <title>The envelope glycoprotein of friend spleen focus-forming virus covalently interacts with and constitutively activates a truncated form of the receptor tyrosine kinase Stk.</title>
        <authorList>
            <person name="Nishigaki K."/>
            <person name="Thompson D."/>
            <person name="Hanson C."/>
            <person name="Yugawa T."/>
            <person name="Ruscetti S."/>
        </authorList>
    </citation>
    <scope>INTERACTION OF ISOFORM SF-STK WITH FRIEND SPLEEN FOCUS-FORMING VIRUS GP55</scope>
</reference>
<feature type="signal peptide" evidence="2">
    <location>
        <begin position="1"/>
        <end position="23"/>
    </location>
</feature>
<feature type="chain" id="PRO_0000024455" description="Macrophage-stimulating protein receptor">
    <location>
        <begin position="24"/>
        <end position="1378"/>
    </location>
</feature>
<feature type="chain" id="PRO_0000024456" description="Macrophage-stimulating protein receptor alpha chain" evidence="2">
    <location>
        <begin position="25"/>
        <end position="305"/>
    </location>
</feature>
<feature type="chain" id="PRO_0000024457" description="Macrophage-stimulating protein receptor beta chain" evidence="2">
    <location>
        <begin position="311"/>
        <end position="1378"/>
    </location>
</feature>
<feature type="topological domain" description="Extracellular" evidence="2">
    <location>
        <begin position="25"/>
        <end position="960"/>
    </location>
</feature>
<feature type="transmembrane region" description="Helical" evidence="2">
    <location>
        <begin position="961"/>
        <end position="981"/>
    </location>
</feature>
<feature type="topological domain" description="Cytoplasmic" evidence="2">
    <location>
        <begin position="982"/>
        <end position="1378"/>
    </location>
</feature>
<feature type="domain" description="Sema" evidence="4">
    <location>
        <begin position="33"/>
        <end position="524"/>
    </location>
</feature>
<feature type="domain" description="IPT/TIG 1">
    <location>
        <begin position="571"/>
        <end position="673"/>
    </location>
</feature>
<feature type="domain" description="IPT/TIG 2">
    <location>
        <begin position="686"/>
        <end position="769"/>
    </location>
</feature>
<feature type="domain" description="IPT/TIG 3">
    <location>
        <begin position="772"/>
        <end position="864"/>
    </location>
</feature>
<feature type="domain" description="Protein kinase" evidence="3">
    <location>
        <begin position="1059"/>
        <end position="1322"/>
    </location>
</feature>
<feature type="region of interest" description="Disordered" evidence="6">
    <location>
        <begin position="1002"/>
        <end position="1026"/>
    </location>
</feature>
<feature type="region of interest" description="Disordered" evidence="6">
    <location>
        <begin position="1347"/>
        <end position="1378"/>
    </location>
</feature>
<feature type="compositionally biased region" description="Basic and acidic residues" evidence="6">
    <location>
        <begin position="1013"/>
        <end position="1022"/>
    </location>
</feature>
<feature type="compositionally biased region" description="Low complexity" evidence="6">
    <location>
        <begin position="1349"/>
        <end position="1360"/>
    </location>
</feature>
<feature type="active site" description="Proton acceptor" evidence="3 5">
    <location>
        <position position="1185"/>
    </location>
</feature>
<feature type="binding site" evidence="3">
    <location>
        <begin position="1065"/>
        <end position="1073"/>
    </location>
    <ligand>
        <name>ATP</name>
        <dbReference type="ChEBI" id="CHEBI:30616"/>
    </ligand>
</feature>
<feature type="binding site" evidence="3">
    <location>
        <position position="1091"/>
    </location>
    <ligand>
        <name>ATP</name>
        <dbReference type="ChEBI" id="CHEBI:30616"/>
    </ligand>
</feature>
<feature type="binding site" evidence="3">
    <location>
        <begin position="1138"/>
        <end position="1141"/>
    </location>
    <ligand>
        <name>ATP</name>
        <dbReference type="ChEBI" id="CHEBI:30616"/>
    </ligand>
</feature>
<feature type="binding site" evidence="3">
    <location>
        <position position="1189"/>
    </location>
    <ligand>
        <name>ATP</name>
        <dbReference type="ChEBI" id="CHEBI:30616"/>
    </ligand>
</feature>
<feature type="modified residue" description="Phosphotyrosine; by autocatalysis" evidence="1">
    <location>
        <position position="1215"/>
    </location>
</feature>
<feature type="modified residue" description="Phosphotyrosine; by autocatalysis" evidence="1">
    <location>
        <position position="1216"/>
    </location>
</feature>
<feature type="modified residue" description="Phosphotyrosine; by autocatalysis" evidence="1">
    <location>
        <position position="1330"/>
    </location>
</feature>
<feature type="modified residue" description="Phosphotyrosine; by autocatalysis" evidence="1">
    <location>
        <position position="1337"/>
    </location>
</feature>
<feature type="glycosylation site" description="N-linked (GlcNAc...) asparagine" evidence="2">
    <location>
        <position position="91"/>
    </location>
</feature>
<feature type="glycosylation site" description="N-linked (GlcNAc...) asparagine" evidence="2">
    <location>
        <position position="391"/>
    </location>
</feature>
<feature type="glycosylation site" description="N-linked (GlcNAc...) asparagine" evidence="2">
    <location>
        <position position="460"/>
    </location>
</feature>
<feature type="glycosylation site" description="N-linked (GlcNAc...) asparagine" evidence="2">
    <location>
        <position position="490"/>
    </location>
</feature>
<feature type="glycosylation site" description="N-linked (GlcNAc...) asparagine" evidence="2">
    <location>
        <position position="656"/>
    </location>
</feature>
<feature type="glycosylation site" description="N-linked (GlcNAc...) asparagine" evidence="2">
    <location>
        <position position="722"/>
    </location>
</feature>
<feature type="glycosylation site" description="N-linked (GlcNAc...) asparagine" evidence="2">
    <location>
        <position position="845"/>
    </location>
</feature>
<feature type="glycosylation site" description="N-linked (GlcNAc...) asparagine" evidence="2">
    <location>
        <position position="901"/>
    </location>
</feature>
<feature type="disulfide bond" evidence="4">
    <location>
        <begin position="102"/>
        <end position="105"/>
    </location>
</feature>
<feature type="disulfide bond" evidence="4">
    <location>
        <begin position="108"/>
        <end position="163"/>
    </location>
</feature>
<feature type="disulfide bond" evidence="4">
    <location>
        <begin position="136"/>
        <end position="144"/>
    </location>
</feature>
<feature type="disulfide bond" evidence="4">
    <location>
        <begin position="175"/>
        <end position="178"/>
    </location>
</feature>
<feature type="disulfide bond" evidence="4">
    <location>
        <begin position="301"/>
        <end position="368"/>
    </location>
</feature>
<feature type="disulfide bond" evidence="4">
    <location>
        <begin position="386"/>
        <end position="409"/>
    </location>
</feature>
<feature type="disulfide bond" evidence="4">
    <location>
        <begin position="387"/>
        <end position="424"/>
    </location>
</feature>
<feature type="disulfide bond" evidence="4">
    <location>
        <begin position="529"/>
        <end position="547"/>
    </location>
</feature>
<feature type="disulfide bond" evidence="4">
    <location>
        <begin position="535"/>
        <end position="569"/>
    </location>
</feature>
<feature type="disulfide bond" evidence="4">
    <location>
        <begin position="538"/>
        <end position="554"/>
    </location>
</feature>
<feature type="disulfide bond" evidence="4">
    <location>
        <begin position="550"/>
        <end position="560"/>
    </location>
</feature>
<feature type="sequence conflict" description="In Ref. 1; CAA52754." evidence="10" ref="1">
    <original>VG</original>
    <variation>IA</variation>
    <location>
        <begin position="713"/>
        <end position="714"/>
    </location>
</feature>
<feature type="sequence conflict" description="In Ref. 1; CAA52754." evidence="10" ref="1">
    <original>V</original>
    <variation>A</variation>
    <location>
        <position position="719"/>
    </location>
</feature>
<feature type="sequence conflict" description="In Ref. 1; CAA52754 and 2; AAC39953." evidence="10" ref="1 2">
    <original>H</original>
    <variation>R</variation>
    <location>
        <position position="1148"/>
    </location>
</feature>
<protein>
    <recommendedName>
        <fullName>Macrophage-stimulating protein receptor</fullName>
        <shortName>MSP receptor</shortName>
        <ecNumber>2.7.10.1</ecNumber>
    </recommendedName>
    <alternativeName>
        <fullName>Stem cell-derived tyrosine kinase</fullName>
    </alternativeName>
    <alternativeName>
        <fullName>p185-Ron</fullName>
    </alternativeName>
    <cdAntigenName>CD136</cdAntigenName>
    <component>
        <recommendedName>
            <fullName>Macrophage-stimulating protein receptor alpha chain</fullName>
        </recommendedName>
    </component>
    <component>
        <recommendedName>
            <fullName>Macrophage-stimulating protein receptor beta chain</fullName>
        </recommendedName>
    </component>
</protein>
<keyword id="KW-0025">Alternative splicing</keyword>
<keyword id="KW-0067">ATP-binding</keyword>
<keyword id="KW-0165">Cleavage on pair of basic residues</keyword>
<keyword id="KW-1015">Disulfide bond</keyword>
<keyword id="KW-0325">Glycoprotein</keyword>
<keyword id="KW-0945">Host-virus interaction</keyword>
<keyword id="KW-0391">Immunity</keyword>
<keyword id="KW-0399">Innate immunity</keyword>
<keyword id="KW-0418">Kinase</keyword>
<keyword id="KW-0472">Membrane</keyword>
<keyword id="KW-0547">Nucleotide-binding</keyword>
<keyword id="KW-0597">Phosphoprotein</keyword>
<keyword id="KW-0675">Receptor</keyword>
<keyword id="KW-1185">Reference proteome</keyword>
<keyword id="KW-0677">Repeat</keyword>
<keyword id="KW-0732">Signal</keyword>
<keyword id="KW-0808">Transferase</keyword>
<keyword id="KW-0812">Transmembrane</keyword>
<keyword id="KW-1133">Transmembrane helix</keyword>
<keyword id="KW-0829">Tyrosine-protein kinase</keyword>
<keyword id="KW-0832">Ubl conjugation</keyword>